<name>GATB_DEBHA</name>
<proteinExistence type="inferred from homology"/>
<feature type="chain" id="PRO_0000413256" description="Glutamyl-tRNA(Gln) amidotransferase subunit B, mitochondrial">
    <location>
        <begin position="1"/>
        <end position="513"/>
    </location>
</feature>
<accession>Q6BT30</accession>
<keyword id="KW-0067">ATP-binding</keyword>
<keyword id="KW-0436">Ligase</keyword>
<keyword id="KW-0496">Mitochondrion</keyword>
<keyword id="KW-0547">Nucleotide-binding</keyword>
<keyword id="KW-0648">Protein biosynthesis</keyword>
<keyword id="KW-1185">Reference proteome</keyword>
<gene>
    <name evidence="1" type="primary">PET112</name>
    <name type="ordered locus">DEHA2D03982g</name>
</gene>
<organism>
    <name type="scientific">Debaryomyces hansenii (strain ATCC 36239 / CBS 767 / BCRC 21394 / JCM 1990 / NBRC 0083 / IGC 2968)</name>
    <name type="common">Yeast</name>
    <name type="synonym">Torulaspora hansenii</name>
    <dbReference type="NCBI Taxonomy" id="284592"/>
    <lineage>
        <taxon>Eukaryota</taxon>
        <taxon>Fungi</taxon>
        <taxon>Dikarya</taxon>
        <taxon>Ascomycota</taxon>
        <taxon>Saccharomycotina</taxon>
        <taxon>Pichiomycetes</taxon>
        <taxon>Debaryomycetaceae</taxon>
        <taxon>Debaryomyces</taxon>
    </lineage>
</organism>
<evidence type="ECO:0000255" key="1">
    <source>
        <dbReference type="HAMAP-Rule" id="MF_03147"/>
    </source>
</evidence>
<sequence length="513" mass="58283">MITLKRLIHSSRSVCSSGFKVDPNYKLKCGLEIHTQLKTKYKLFSLSSSKFDSEPNTNVSYFDCGLPGTLPKLNPEALYLALKTAVALNSDVQSFSTFDRKHYFYPDQPQGFQITQRYHPIARNGYLELNSKFDDITEDSKTINIEQIQIEQDTGKTNYDKYDKLIKIDLNRSNVPLIELVTKPDFENMSQIRAFIKKYQTLVKHLDVCTGDLETGAIRIDLNVSINGGNRVEVKNLGSSSELASALKSEYHRQIQLTKENFPVIQETRGWNGKETVRLRSKEDAVEYRYVPDSELPFINLDPEISREIAAALPDLPDAIITKLISEPYNLELKHAKFFIANKDILNYYYDLFQIVVIDAGKDHKVANNWLVHELIGAFSKFEVPLDISLIPPTKLGEIIIMVSNDELTTTSAKLLLSQLVKSPDDKELTIQELIEKYDVGKIKDITENELSEAVEEVCVYIIANNQDVIEKIVTGKPKSINYLIGLAMKETNGKVNSNVFESKFKELIADYK</sequence>
<comment type="function">
    <text evidence="1">Allows the formation of correctly charged Gln-tRNA(Gln) through the transamidation of misacylated Glu-tRNA(Gln) in the mitochondria. The reaction takes place in the presence of glutamine and ATP through an activated gamma-phospho-Glu-tRNA(Gln).</text>
</comment>
<comment type="catalytic activity">
    <reaction evidence="1">
        <text>L-glutamyl-tRNA(Gln) + L-glutamine + ATP + H2O = L-glutaminyl-tRNA(Gln) + L-glutamate + ADP + phosphate + H(+)</text>
        <dbReference type="Rhea" id="RHEA:17521"/>
        <dbReference type="Rhea" id="RHEA-COMP:9681"/>
        <dbReference type="Rhea" id="RHEA-COMP:9684"/>
        <dbReference type="ChEBI" id="CHEBI:15377"/>
        <dbReference type="ChEBI" id="CHEBI:15378"/>
        <dbReference type="ChEBI" id="CHEBI:29985"/>
        <dbReference type="ChEBI" id="CHEBI:30616"/>
        <dbReference type="ChEBI" id="CHEBI:43474"/>
        <dbReference type="ChEBI" id="CHEBI:58359"/>
        <dbReference type="ChEBI" id="CHEBI:78520"/>
        <dbReference type="ChEBI" id="CHEBI:78521"/>
        <dbReference type="ChEBI" id="CHEBI:456216"/>
    </reaction>
</comment>
<comment type="subunit">
    <text evidence="1">Subunit of the heterotrimeric GatFAB amidotransferase (AdT) complex, composed of A, B and F subunits.</text>
</comment>
<comment type="subcellular location">
    <subcellularLocation>
        <location evidence="1">Mitochondrion</location>
    </subcellularLocation>
</comment>
<comment type="miscellaneous">
    <text evidence="1">This protein may be expected to contain an N-terminal transit peptide but none has been predicted.</text>
</comment>
<comment type="similarity">
    <text evidence="1">Belongs to the GatB/GatE family. GatB subfamily.</text>
</comment>
<protein>
    <recommendedName>
        <fullName evidence="1">Glutamyl-tRNA(Gln) amidotransferase subunit B, mitochondrial</fullName>
        <shortName evidence="1">Glu-AdT subunit B</shortName>
        <ecNumber evidence="1">6.3.5.-</ecNumber>
    </recommendedName>
</protein>
<dbReference type="EC" id="6.3.5.-" evidence="1"/>
<dbReference type="EMBL" id="CR382136">
    <property type="protein sequence ID" value="CAG86779.2"/>
    <property type="molecule type" value="Genomic_DNA"/>
</dbReference>
<dbReference type="RefSeq" id="XP_458640.2">
    <property type="nucleotide sequence ID" value="XM_458640.1"/>
</dbReference>
<dbReference type="SMR" id="Q6BT30"/>
<dbReference type="FunCoup" id="Q6BT30">
    <property type="interactions" value="387"/>
</dbReference>
<dbReference type="STRING" id="284592.Q6BT30"/>
<dbReference type="GeneID" id="2901133"/>
<dbReference type="KEGG" id="dha:DEHA2D03982g"/>
<dbReference type="VEuPathDB" id="FungiDB:DEHA2D03982g"/>
<dbReference type="eggNOG" id="KOG2438">
    <property type="taxonomic scope" value="Eukaryota"/>
</dbReference>
<dbReference type="HOGENOM" id="CLU_019240_4_0_1"/>
<dbReference type="InParanoid" id="Q6BT30"/>
<dbReference type="OMA" id="ARKWWMG"/>
<dbReference type="OrthoDB" id="1722066at2759"/>
<dbReference type="Proteomes" id="UP000000599">
    <property type="component" value="Chromosome D"/>
</dbReference>
<dbReference type="GO" id="GO:0030956">
    <property type="term" value="C:glutamyl-tRNA(Gln) amidotransferase complex"/>
    <property type="evidence" value="ECO:0007669"/>
    <property type="project" value="UniProtKB-UniRule"/>
</dbReference>
<dbReference type="GO" id="GO:0005739">
    <property type="term" value="C:mitochondrion"/>
    <property type="evidence" value="ECO:0007669"/>
    <property type="project" value="UniProtKB-SubCell"/>
</dbReference>
<dbReference type="GO" id="GO:0005524">
    <property type="term" value="F:ATP binding"/>
    <property type="evidence" value="ECO:0007669"/>
    <property type="project" value="UniProtKB-KW"/>
</dbReference>
<dbReference type="GO" id="GO:0050567">
    <property type="term" value="F:glutaminyl-tRNA synthase (glutamine-hydrolyzing) activity"/>
    <property type="evidence" value="ECO:0007669"/>
    <property type="project" value="UniProtKB-UniRule"/>
</dbReference>
<dbReference type="GO" id="GO:0070681">
    <property type="term" value="P:glutaminyl-tRNAGln biosynthesis via transamidation"/>
    <property type="evidence" value="ECO:0007669"/>
    <property type="project" value="UniProtKB-UniRule"/>
</dbReference>
<dbReference type="GO" id="GO:0032543">
    <property type="term" value="P:mitochondrial translation"/>
    <property type="evidence" value="ECO:0007669"/>
    <property type="project" value="UniProtKB-UniRule"/>
</dbReference>
<dbReference type="Gene3D" id="1.10.10.410">
    <property type="match status" value="1"/>
</dbReference>
<dbReference type="HAMAP" id="MF_00121">
    <property type="entry name" value="GatB"/>
    <property type="match status" value="1"/>
</dbReference>
<dbReference type="InterPro" id="IPR017959">
    <property type="entry name" value="Asn/Gln-tRNA_amidoTrfase_suB/E"/>
</dbReference>
<dbReference type="InterPro" id="IPR006075">
    <property type="entry name" value="Asn/Gln-tRNA_Trfase_suB/E_cat"/>
</dbReference>
<dbReference type="InterPro" id="IPR018027">
    <property type="entry name" value="Asn/Gln_amidotransferase"/>
</dbReference>
<dbReference type="InterPro" id="IPR003789">
    <property type="entry name" value="Asn/Gln_tRNA_amidoTrase-B-like"/>
</dbReference>
<dbReference type="InterPro" id="IPR004413">
    <property type="entry name" value="GatB"/>
</dbReference>
<dbReference type="InterPro" id="IPR023168">
    <property type="entry name" value="GatB_Yqey_C_2"/>
</dbReference>
<dbReference type="InterPro" id="IPR017958">
    <property type="entry name" value="Gln-tRNA_amidoTrfase_suB_CS"/>
</dbReference>
<dbReference type="InterPro" id="IPR014746">
    <property type="entry name" value="Gln_synth/guanido_kin_cat_dom"/>
</dbReference>
<dbReference type="NCBIfam" id="TIGR00133">
    <property type="entry name" value="gatB"/>
    <property type="match status" value="1"/>
</dbReference>
<dbReference type="NCBIfam" id="NF004012">
    <property type="entry name" value="PRK05477.1-2"/>
    <property type="match status" value="1"/>
</dbReference>
<dbReference type="PANTHER" id="PTHR11659">
    <property type="entry name" value="GLUTAMYL-TRNA GLN AMIDOTRANSFERASE SUBUNIT B MITOCHONDRIAL AND PROKARYOTIC PET112-RELATED"/>
    <property type="match status" value="1"/>
</dbReference>
<dbReference type="PANTHER" id="PTHR11659:SF0">
    <property type="entry name" value="GLUTAMYL-TRNA(GLN) AMIDOTRANSFERASE SUBUNIT B, MITOCHONDRIAL"/>
    <property type="match status" value="1"/>
</dbReference>
<dbReference type="Pfam" id="PF02934">
    <property type="entry name" value="GatB_N"/>
    <property type="match status" value="1"/>
</dbReference>
<dbReference type="Pfam" id="PF02637">
    <property type="entry name" value="GatB_Yqey"/>
    <property type="match status" value="1"/>
</dbReference>
<dbReference type="SMART" id="SM00845">
    <property type="entry name" value="GatB_Yqey"/>
    <property type="match status" value="1"/>
</dbReference>
<dbReference type="SUPFAM" id="SSF89095">
    <property type="entry name" value="GatB/YqeY motif"/>
    <property type="match status" value="1"/>
</dbReference>
<dbReference type="SUPFAM" id="SSF55931">
    <property type="entry name" value="Glutamine synthetase/guanido kinase"/>
    <property type="match status" value="1"/>
</dbReference>
<dbReference type="PROSITE" id="PS01234">
    <property type="entry name" value="GATB"/>
    <property type="match status" value="1"/>
</dbReference>
<reference key="1">
    <citation type="journal article" date="2004" name="Nature">
        <title>Genome evolution in yeasts.</title>
        <authorList>
            <person name="Dujon B."/>
            <person name="Sherman D."/>
            <person name="Fischer G."/>
            <person name="Durrens P."/>
            <person name="Casaregola S."/>
            <person name="Lafontaine I."/>
            <person name="de Montigny J."/>
            <person name="Marck C."/>
            <person name="Neuveglise C."/>
            <person name="Talla E."/>
            <person name="Goffard N."/>
            <person name="Frangeul L."/>
            <person name="Aigle M."/>
            <person name="Anthouard V."/>
            <person name="Babour A."/>
            <person name="Barbe V."/>
            <person name="Barnay S."/>
            <person name="Blanchin S."/>
            <person name="Beckerich J.-M."/>
            <person name="Beyne E."/>
            <person name="Bleykasten C."/>
            <person name="Boisrame A."/>
            <person name="Boyer J."/>
            <person name="Cattolico L."/>
            <person name="Confanioleri F."/>
            <person name="de Daruvar A."/>
            <person name="Despons L."/>
            <person name="Fabre E."/>
            <person name="Fairhead C."/>
            <person name="Ferry-Dumazet H."/>
            <person name="Groppi A."/>
            <person name="Hantraye F."/>
            <person name="Hennequin C."/>
            <person name="Jauniaux N."/>
            <person name="Joyet P."/>
            <person name="Kachouri R."/>
            <person name="Kerrest A."/>
            <person name="Koszul R."/>
            <person name="Lemaire M."/>
            <person name="Lesur I."/>
            <person name="Ma L."/>
            <person name="Muller H."/>
            <person name="Nicaud J.-M."/>
            <person name="Nikolski M."/>
            <person name="Oztas S."/>
            <person name="Ozier-Kalogeropoulos O."/>
            <person name="Pellenz S."/>
            <person name="Potier S."/>
            <person name="Richard G.-F."/>
            <person name="Straub M.-L."/>
            <person name="Suleau A."/>
            <person name="Swennen D."/>
            <person name="Tekaia F."/>
            <person name="Wesolowski-Louvel M."/>
            <person name="Westhof E."/>
            <person name="Wirth B."/>
            <person name="Zeniou-Meyer M."/>
            <person name="Zivanovic Y."/>
            <person name="Bolotin-Fukuhara M."/>
            <person name="Thierry A."/>
            <person name="Bouchier C."/>
            <person name="Caudron B."/>
            <person name="Scarpelli C."/>
            <person name="Gaillardin C."/>
            <person name="Weissenbach J."/>
            <person name="Wincker P."/>
            <person name="Souciet J.-L."/>
        </authorList>
    </citation>
    <scope>NUCLEOTIDE SEQUENCE [LARGE SCALE GENOMIC DNA]</scope>
    <source>
        <strain>ATCC 36239 / CBS 767 / BCRC 21394 / JCM 1990 / NBRC 0083 / IGC 2968</strain>
    </source>
</reference>